<protein>
    <recommendedName>
        <fullName evidence="1">Eukaryotic translation initiation factor 3 subunit M</fullName>
        <shortName evidence="1">eIF3m</shortName>
    </recommendedName>
</protein>
<gene>
    <name type="primary">eif3m</name>
    <name type="ORF">si:ch211-4l14.1</name>
    <name type="ORF">zgc:63996</name>
</gene>
<dbReference type="EMBL" id="AY398350">
    <property type="protein sequence ID" value="AAQ97783.1"/>
    <property type="molecule type" value="mRNA"/>
</dbReference>
<dbReference type="EMBL" id="CR936403">
    <property type="protein sequence ID" value="CAK04951.1"/>
    <property type="molecule type" value="Genomic_DNA"/>
</dbReference>
<dbReference type="EMBL" id="BC053188">
    <property type="protein sequence ID" value="AAH53188.1"/>
    <property type="molecule type" value="mRNA"/>
</dbReference>
<dbReference type="RefSeq" id="NP_001019906.1">
    <property type="nucleotide sequence ID" value="NM_001024735.1"/>
</dbReference>
<dbReference type="SMR" id="Q7T3B0"/>
<dbReference type="FunCoup" id="Q7T3B0">
    <property type="interactions" value="2969"/>
</dbReference>
<dbReference type="STRING" id="7955.ENSDARP00000024129"/>
<dbReference type="PaxDb" id="7955-ENSDARP00000024129"/>
<dbReference type="Ensembl" id="ENSDART00000010256">
    <property type="protein sequence ID" value="ENSDARP00000024129"/>
    <property type="gene ID" value="ENSDARG00000013931"/>
</dbReference>
<dbReference type="GeneID" id="334626"/>
<dbReference type="KEGG" id="dre:334626"/>
<dbReference type="AGR" id="ZFIN:ZDB-GENE-040426-2643"/>
<dbReference type="CTD" id="10480"/>
<dbReference type="ZFIN" id="ZDB-GENE-040426-2643">
    <property type="gene designation" value="eif3m"/>
</dbReference>
<dbReference type="eggNOG" id="KOG2753">
    <property type="taxonomic scope" value="Eukaryota"/>
</dbReference>
<dbReference type="HOGENOM" id="CLU_035254_1_0_1"/>
<dbReference type="InParanoid" id="Q7T3B0"/>
<dbReference type="OMA" id="VCLKALW"/>
<dbReference type="OrthoDB" id="10267031at2759"/>
<dbReference type="PhylomeDB" id="Q7T3B0"/>
<dbReference type="TreeFam" id="TF106148"/>
<dbReference type="Reactome" id="R-DRE-156827">
    <property type="pathway name" value="L13a-mediated translational silencing of Ceruloplasmin expression"/>
</dbReference>
<dbReference type="Reactome" id="R-DRE-72689">
    <property type="pathway name" value="Formation of a pool of free 40S subunits"/>
</dbReference>
<dbReference type="Reactome" id="R-DRE-72695">
    <property type="pathway name" value="Formation of the ternary complex, and subsequently, the 43S complex"/>
</dbReference>
<dbReference type="Reactome" id="R-DRE-72702">
    <property type="pathway name" value="Ribosomal scanning and start codon recognition"/>
</dbReference>
<dbReference type="PRO" id="PR:Q7T3B0"/>
<dbReference type="Proteomes" id="UP000000437">
    <property type="component" value="Chromosome 18"/>
</dbReference>
<dbReference type="Bgee" id="ENSDARG00000013931">
    <property type="expression patterns" value="Expressed in pharyngeal gill and 31 other cell types or tissues"/>
</dbReference>
<dbReference type="GO" id="GO:0016282">
    <property type="term" value="C:eukaryotic 43S preinitiation complex"/>
    <property type="evidence" value="ECO:0007669"/>
    <property type="project" value="UniProtKB-UniRule"/>
</dbReference>
<dbReference type="GO" id="GO:0033290">
    <property type="term" value="C:eukaryotic 48S preinitiation complex"/>
    <property type="evidence" value="ECO:0007669"/>
    <property type="project" value="UniProtKB-UniRule"/>
</dbReference>
<dbReference type="GO" id="GO:0005852">
    <property type="term" value="C:eukaryotic translation initiation factor 3 complex"/>
    <property type="evidence" value="ECO:0000318"/>
    <property type="project" value="GO_Central"/>
</dbReference>
<dbReference type="GO" id="GO:0071541">
    <property type="term" value="C:eukaryotic translation initiation factor 3 complex, eIF3m"/>
    <property type="evidence" value="ECO:0007669"/>
    <property type="project" value="UniProtKB-UniRule"/>
</dbReference>
<dbReference type="GO" id="GO:0003743">
    <property type="term" value="F:translation initiation factor activity"/>
    <property type="evidence" value="ECO:0007669"/>
    <property type="project" value="UniProtKB-UniRule"/>
</dbReference>
<dbReference type="GO" id="GO:0002183">
    <property type="term" value="P:cytoplasmic translational initiation"/>
    <property type="evidence" value="ECO:0000318"/>
    <property type="project" value="GO_Central"/>
</dbReference>
<dbReference type="GO" id="GO:0001732">
    <property type="term" value="P:formation of cytoplasmic translation initiation complex"/>
    <property type="evidence" value="ECO:0007669"/>
    <property type="project" value="UniProtKB-UniRule"/>
</dbReference>
<dbReference type="HAMAP" id="MF_03012">
    <property type="entry name" value="eIF3m"/>
    <property type="match status" value="1"/>
</dbReference>
<dbReference type="InterPro" id="IPR016024">
    <property type="entry name" value="ARM-type_fold"/>
</dbReference>
<dbReference type="InterPro" id="IPR045237">
    <property type="entry name" value="COPS7/eIF3m"/>
</dbReference>
<dbReference type="InterPro" id="IPR027528">
    <property type="entry name" value="eIF3m"/>
</dbReference>
<dbReference type="InterPro" id="IPR040750">
    <property type="entry name" value="eIF3m_C_helix"/>
</dbReference>
<dbReference type="InterPro" id="IPR000717">
    <property type="entry name" value="PCI_dom"/>
</dbReference>
<dbReference type="InterPro" id="IPR036390">
    <property type="entry name" value="WH_DNA-bd_sf"/>
</dbReference>
<dbReference type="PANTHER" id="PTHR15350">
    <property type="entry name" value="COP9 SIGNALOSOME COMPLEX SUBUNIT 7/DENDRITIC CELL PROTEIN GA17"/>
    <property type="match status" value="1"/>
</dbReference>
<dbReference type="PANTHER" id="PTHR15350:SF2">
    <property type="entry name" value="EUKARYOTIC TRANSLATION INITIATION FACTOR 3 SUBUNIT M"/>
    <property type="match status" value="1"/>
</dbReference>
<dbReference type="Pfam" id="PF18005">
    <property type="entry name" value="eIF3m_C_helix"/>
    <property type="match status" value="1"/>
</dbReference>
<dbReference type="Pfam" id="PF01399">
    <property type="entry name" value="PCI"/>
    <property type="match status" value="1"/>
</dbReference>
<dbReference type="SMART" id="SM00088">
    <property type="entry name" value="PINT"/>
    <property type="match status" value="1"/>
</dbReference>
<dbReference type="SUPFAM" id="SSF48371">
    <property type="entry name" value="ARM repeat"/>
    <property type="match status" value="1"/>
</dbReference>
<dbReference type="SUPFAM" id="SSF46785">
    <property type="entry name" value="Winged helix' DNA-binding domain"/>
    <property type="match status" value="1"/>
</dbReference>
<dbReference type="PROSITE" id="PS50250">
    <property type="entry name" value="PCI"/>
    <property type="match status" value="1"/>
</dbReference>
<reference key="1">
    <citation type="journal article" date="2004" name="Proc. Natl. Acad. Sci. U.S.A.">
        <title>Hematopoietic gene expression profile in zebrafish kidney marrow.</title>
        <authorList>
            <person name="Song H.-D."/>
            <person name="Sun X.-J."/>
            <person name="Deng M."/>
            <person name="Zhang G.-W."/>
            <person name="Zhou Y."/>
            <person name="Wu X.-Y."/>
            <person name="Sheng Y."/>
            <person name="Chen Y."/>
            <person name="Ruan Z."/>
            <person name="Jiang C.-L."/>
            <person name="Fan H.-Y."/>
            <person name="Zon L.I."/>
            <person name="Kanki J.P."/>
            <person name="Liu T.X."/>
            <person name="Look A.T."/>
            <person name="Chen Z."/>
        </authorList>
    </citation>
    <scope>NUCLEOTIDE SEQUENCE [LARGE SCALE MRNA]</scope>
    <source>
        <tissue>Kidney marrow</tissue>
    </source>
</reference>
<reference key="2">
    <citation type="journal article" date="2013" name="Nature">
        <title>The zebrafish reference genome sequence and its relationship to the human genome.</title>
        <authorList>
            <person name="Howe K."/>
            <person name="Clark M.D."/>
            <person name="Torroja C.F."/>
            <person name="Torrance J."/>
            <person name="Berthelot C."/>
            <person name="Muffato M."/>
            <person name="Collins J.E."/>
            <person name="Humphray S."/>
            <person name="McLaren K."/>
            <person name="Matthews L."/>
            <person name="McLaren S."/>
            <person name="Sealy I."/>
            <person name="Caccamo M."/>
            <person name="Churcher C."/>
            <person name="Scott C."/>
            <person name="Barrett J.C."/>
            <person name="Koch R."/>
            <person name="Rauch G.J."/>
            <person name="White S."/>
            <person name="Chow W."/>
            <person name="Kilian B."/>
            <person name="Quintais L.T."/>
            <person name="Guerra-Assuncao J.A."/>
            <person name="Zhou Y."/>
            <person name="Gu Y."/>
            <person name="Yen J."/>
            <person name="Vogel J.H."/>
            <person name="Eyre T."/>
            <person name="Redmond S."/>
            <person name="Banerjee R."/>
            <person name="Chi J."/>
            <person name="Fu B."/>
            <person name="Langley E."/>
            <person name="Maguire S.F."/>
            <person name="Laird G.K."/>
            <person name="Lloyd D."/>
            <person name="Kenyon E."/>
            <person name="Donaldson S."/>
            <person name="Sehra H."/>
            <person name="Almeida-King J."/>
            <person name="Loveland J."/>
            <person name="Trevanion S."/>
            <person name="Jones M."/>
            <person name="Quail M."/>
            <person name="Willey D."/>
            <person name="Hunt A."/>
            <person name="Burton J."/>
            <person name="Sims S."/>
            <person name="McLay K."/>
            <person name="Plumb B."/>
            <person name="Davis J."/>
            <person name="Clee C."/>
            <person name="Oliver K."/>
            <person name="Clark R."/>
            <person name="Riddle C."/>
            <person name="Elliot D."/>
            <person name="Threadgold G."/>
            <person name="Harden G."/>
            <person name="Ware D."/>
            <person name="Begum S."/>
            <person name="Mortimore B."/>
            <person name="Kerry G."/>
            <person name="Heath P."/>
            <person name="Phillimore B."/>
            <person name="Tracey A."/>
            <person name="Corby N."/>
            <person name="Dunn M."/>
            <person name="Johnson C."/>
            <person name="Wood J."/>
            <person name="Clark S."/>
            <person name="Pelan S."/>
            <person name="Griffiths G."/>
            <person name="Smith M."/>
            <person name="Glithero R."/>
            <person name="Howden P."/>
            <person name="Barker N."/>
            <person name="Lloyd C."/>
            <person name="Stevens C."/>
            <person name="Harley J."/>
            <person name="Holt K."/>
            <person name="Panagiotidis G."/>
            <person name="Lovell J."/>
            <person name="Beasley H."/>
            <person name="Henderson C."/>
            <person name="Gordon D."/>
            <person name="Auger K."/>
            <person name="Wright D."/>
            <person name="Collins J."/>
            <person name="Raisen C."/>
            <person name="Dyer L."/>
            <person name="Leung K."/>
            <person name="Robertson L."/>
            <person name="Ambridge K."/>
            <person name="Leongamornlert D."/>
            <person name="McGuire S."/>
            <person name="Gilderthorp R."/>
            <person name="Griffiths C."/>
            <person name="Manthravadi D."/>
            <person name="Nichol S."/>
            <person name="Barker G."/>
            <person name="Whitehead S."/>
            <person name="Kay M."/>
            <person name="Brown J."/>
            <person name="Murnane C."/>
            <person name="Gray E."/>
            <person name="Humphries M."/>
            <person name="Sycamore N."/>
            <person name="Barker D."/>
            <person name="Saunders D."/>
            <person name="Wallis J."/>
            <person name="Babbage A."/>
            <person name="Hammond S."/>
            <person name="Mashreghi-Mohammadi M."/>
            <person name="Barr L."/>
            <person name="Martin S."/>
            <person name="Wray P."/>
            <person name="Ellington A."/>
            <person name="Matthews N."/>
            <person name="Ellwood M."/>
            <person name="Woodmansey R."/>
            <person name="Clark G."/>
            <person name="Cooper J."/>
            <person name="Tromans A."/>
            <person name="Grafham D."/>
            <person name="Skuce C."/>
            <person name="Pandian R."/>
            <person name="Andrews R."/>
            <person name="Harrison E."/>
            <person name="Kimberley A."/>
            <person name="Garnett J."/>
            <person name="Fosker N."/>
            <person name="Hall R."/>
            <person name="Garner P."/>
            <person name="Kelly D."/>
            <person name="Bird C."/>
            <person name="Palmer S."/>
            <person name="Gehring I."/>
            <person name="Berger A."/>
            <person name="Dooley C.M."/>
            <person name="Ersan-Urun Z."/>
            <person name="Eser C."/>
            <person name="Geiger H."/>
            <person name="Geisler M."/>
            <person name="Karotki L."/>
            <person name="Kirn A."/>
            <person name="Konantz J."/>
            <person name="Konantz M."/>
            <person name="Oberlander M."/>
            <person name="Rudolph-Geiger S."/>
            <person name="Teucke M."/>
            <person name="Lanz C."/>
            <person name="Raddatz G."/>
            <person name="Osoegawa K."/>
            <person name="Zhu B."/>
            <person name="Rapp A."/>
            <person name="Widaa S."/>
            <person name="Langford C."/>
            <person name="Yang F."/>
            <person name="Schuster S.C."/>
            <person name="Carter N.P."/>
            <person name="Harrow J."/>
            <person name="Ning Z."/>
            <person name="Herrero J."/>
            <person name="Searle S.M."/>
            <person name="Enright A."/>
            <person name="Geisler R."/>
            <person name="Plasterk R.H."/>
            <person name="Lee C."/>
            <person name="Westerfield M."/>
            <person name="de Jong P.J."/>
            <person name="Zon L.I."/>
            <person name="Postlethwait J.H."/>
            <person name="Nusslein-Volhard C."/>
            <person name="Hubbard T.J."/>
            <person name="Roest Crollius H."/>
            <person name="Rogers J."/>
            <person name="Stemple D.L."/>
        </authorList>
    </citation>
    <scope>NUCLEOTIDE SEQUENCE [LARGE SCALE GENOMIC DNA]</scope>
    <source>
        <strain>Tuebingen</strain>
    </source>
</reference>
<reference key="3">
    <citation type="submission" date="2003-06" db="EMBL/GenBank/DDBJ databases">
        <authorList>
            <consortium name="NIH - Zebrafish Gene Collection (ZGC) project"/>
        </authorList>
    </citation>
    <scope>NUCLEOTIDE SEQUENCE [LARGE SCALE MRNA]</scope>
    <source>
        <tissue>Kidney</tissue>
    </source>
</reference>
<accession>Q7T3B0</accession>
<accession>Q1L885</accession>
<proteinExistence type="evidence at transcript level"/>
<comment type="function">
    <text evidence="1">Component of the eukaryotic translation initiation factor 3 (eIF-3) complex, which is involved in protein synthesis of a specialized repertoire of mRNAs and, together with other initiation factors, stimulates binding of mRNA and methionyl-tRNAi to the 40S ribosome. The eIF-3 complex specifically targets and initiates translation of a subset of mRNAs involved in cell proliferation.</text>
</comment>
<comment type="subunit">
    <text evidence="1">Component of the eukaryotic translation initiation factor 3 (eIF-3) complex, which is composed of 13 subunits: eif3a, eif3b, eif3c, eif3d, eif3e, eif3f, eif3g, eif3h, eif3i, eif3j, eif3k, eif3l and eif3m.</text>
</comment>
<comment type="subcellular location">
    <subcellularLocation>
        <location evidence="1">Cytoplasm</location>
    </subcellularLocation>
</comment>
<comment type="similarity">
    <text evidence="1">Belongs to the eIF-3 subunit M family.</text>
</comment>
<organism>
    <name type="scientific">Danio rerio</name>
    <name type="common">Zebrafish</name>
    <name type="synonym">Brachydanio rerio</name>
    <dbReference type="NCBI Taxonomy" id="7955"/>
    <lineage>
        <taxon>Eukaryota</taxon>
        <taxon>Metazoa</taxon>
        <taxon>Chordata</taxon>
        <taxon>Craniata</taxon>
        <taxon>Vertebrata</taxon>
        <taxon>Euteleostomi</taxon>
        <taxon>Actinopterygii</taxon>
        <taxon>Neopterygii</taxon>
        <taxon>Teleostei</taxon>
        <taxon>Ostariophysi</taxon>
        <taxon>Cypriniformes</taxon>
        <taxon>Danionidae</taxon>
        <taxon>Danioninae</taxon>
        <taxon>Danio</taxon>
    </lineage>
</organism>
<name>EIF3M_DANRE</name>
<feature type="chain" id="PRO_0000308199" description="Eukaryotic translation initiation factor 3 subunit M">
    <location>
        <begin position="1"/>
        <end position="375"/>
    </location>
</feature>
<feature type="domain" description="PCI" evidence="2">
    <location>
        <begin position="180"/>
        <end position="339"/>
    </location>
</feature>
<feature type="sequence conflict" description="In Ref. 1; AAQ97783 and 3; AAH53188." evidence="3" ref="1 3">
    <original>T</original>
    <variation>A</variation>
    <location>
        <position position="138"/>
    </location>
</feature>
<sequence>MSVPAFIDITEEDQASELRSYLKSKGAEISEENSEGGLHVDLAQIIEACDVCLKDDDKDVESVMNSIVSLLLILETEKQEALIESLCEKLVKFREGERPSLRMQLLSNLFHGMDENTPVRHTVYCSLIKVAATCNAITFMPTDLDQVRKWIVDWNLNTEKKHTLLRLVYEALVDCKKSEAAAKVMVELLGSYTEDNASQARVDAHRCIVRALKDPNTYLFDHLLALKPVRFLEGELIHDLLTIFVSAKLISYVKFYQSNKDFIESLGLSHEQNMSKMRLLTFMGMAVEMKEISFETMQQELQIGAEDVEAFVIDAVRTKMVYSKIDQTQRKVVVSHSTHRTFGKQQWQQLYDTLCSWKQNLSTVKSSLQTLSPTA</sequence>
<keyword id="KW-0963">Cytoplasm</keyword>
<keyword id="KW-0396">Initiation factor</keyword>
<keyword id="KW-0648">Protein biosynthesis</keyword>
<keyword id="KW-1185">Reference proteome</keyword>
<evidence type="ECO:0000255" key="1">
    <source>
        <dbReference type="HAMAP-Rule" id="MF_03012"/>
    </source>
</evidence>
<evidence type="ECO:0000255" key="2">
    <source>
        <dbReference type="PROSITE-ProRule" id="PRU01185"/>
    </source>
</evidence>
<evidence type="ECO:0000305" key="3"/>